<proteinExistence type="inferred from homology"/>
<protein>
    <recommendedName>
        <fullName evidence="1">DNA mismatch repair protein MutL</fullName>
    </recommendedName>
</protein>
<evidence type="ECO:0000255" key="1">
    <source>
        <dbReference type="HAMAP-Rule" id="MF_00149"/>
    </source>
</evidence>
<comment type="function">
    <text evidence="1">This protein is involved in the repair of mismatches in DNA. It is required for dam-dependent methyl-directed DNA mismatch repair. May act as a 'molecular matchmaker', a protein that promotes the formation of a stable complex between two or more DNA-binding proteins in an ATP-dependent manner without itself being part of a final effector complex.</text>
</comment>
<comment type="similarity">
    <text evidence="1">Belongs to the DNA mismatch repair MutL/HexB family.</text>
</comment>
<organism>
    <name type="scientific">Buchnera aphidicola subsp. Acyrthosiphon pisum (strain Tuc7)</name>
    <dbReference type="NCBI Taxonomy" id="561501"/>
    <lineage>
        <taxon>Bacteria</taxon>
        <taxon>Pseudomonadati</taxon>
        <taxon>Pseudomonadota</taxon>
        <taxon>Gammaproteobacteria</taxon>
        <taxon>Enterobacterales</taxon>
        <taxon>Erwiniaceae</taxon>
        <taxon>Buchnera</taxon>
    </lineage>
</organism>
<name>MUTL_BUCAT</name>
<keyword id="KW-0227">DNA damage</keyword>
<keyword id="KW-0234">DNA repair</keyword>
<sequence>MPIRILPSDLSSQISAGEIIERPASVVKEIIENSIDAGSKNINIIVENSGFQSIILKDDGCGIDKKDLLLAVCHHATSKINSLSDLDKLTTFGFRGEALASIRAVSRLTLISCTRFNDVAAKIYLEGFCSKNIILQPIAHPEGTTIIVDNLFYNIPVRLKFLKNKKLEFSKICEVVKKIALSHFYINFSLKHNNKLITQYNSINNRKNKINRLKDIFDTLDTSEFLEIKEKKYRMVLFGWISHPYNFKKIKNIQYCYVNNRYLYNNIFVNAVRAAYSKIEQKKNISFVLYLTIESFNIDINIHPTKNEIKFHNPDVVYTFIYEAVFSYLKKIKEKYYFNFSCKKQTQLNKEKEFYFYDSDPTFLTLISSIFFKKKQIFKNIKNKIKHNNFISKSTPLEKYESSIGRLLIIIHKYYGLIYHDNNFLLLSFPVAKGIVRKQKLKNNIQKENIIEYFLSNIKINLTSQEYLILFNQKEILSKFGFHLIFKKKYVILSSIPAFLKKCNFHIIISNFFAFLFLKKQVFISDIVDWFYINVFIELKNWTYIRGIEVLLEIEYYCPLLLINPPSKLLQKININAALCILKI</sequence>
<dbReference type="EMBL" id="CP001158">
    <property type="protein sequence ID" value="ACL30356.1"/>
    <property type="molecule type" value="Genomic_DNA"/>
</dbReference>
<dbReference type="RefSeq" id="WP_012619586.1">
    <property type="nucleotide sequence ID" value="NC_011834.1"/>
</dbReference>
<dbReference type="SMR" id="B8D891"/>
<dbReference type="KEGG" id="bau:BUAPTUC7_564"/>
<dbReference type="HOGENOM" id="CLU_004131_5_1_6"/>
<dbReference type="GO" id="GO:0032300">
    <property type="term" value="C:mismatch repair complex"/>
    <property type="evidence" value="ECO:0007669"/>
    <property type="project" value="InterPro"/>
</dbReference>
<dbReference type="GO" id="GO:0005524">
    <property type="term" value="F:ATP binding"/>
    <property type="evidence" value="ECO:0007669"/>
    <property type="project" value="InterPro"/>
</dbReference>
<dbReference type="GO" id="GO:0016887">
    <property type="term" value="F:ATP hydrolysis activity"/>
    <property type="evidence" value="ECO:0007669"/>
    <property type="project" value="InterPro"/>
</dbReference>
<dbReference type="GO" id="GO:0140664">
    <property type="term" value="F:ATP-dependent DNA damage sensor activity"/>
    <property type="evidence" value="ECO:0007669"/>
    <property type="project" value="InterPro"/>
</dbReference>
<dbReference type="GO" id="GO:0030983">
    <property type="term" value="F:mismatched DNA binding"/>
    <property type="evidence" value="ECO:0007669"/>
    <property type="project" value="InterPro"/>
</dbReference>
<dbReference type="GO" id="GO:0006298">
    <property type="term" value="P:mismatch repair"/>
    <property type="evidence" value="ECO:0007669"/>
    <property type="project" value="UniProtKB-UniRule"/>
</dbReference>
<dbReference type="CDD" id="cd16926">
    <property type="entry name" value="HATPase_MutL-MLH-PMS-like"/>
    <property type="match status" value="1"/>
</dbReference>
<dbReference type="CDD" id="cd03482">
    <property type="entry name" value="MutL_Trans_MutL"/>
    <property type="match status" value="1"/>
</dbReference>
<dbReference type="FunFam" id="3.30.565.10:FF:000003">
    <property type="entry name" value="DNA mismatch repair endonuclease MutL"/>
    <property type="match status" value="1"/>
</dbReference>
<dbReference type="Gene3D" id="3.30.230.10">
    <property type="match status" value="1"/>
</dbReference>
<dbReference type="Gene3D" id="3.30.565.10">
    <property type="entry name" value="Histidine kinase-like ATPase, C-terminal domain"/>
    <property type="match status" value="1"/>
</dbReference>
<dbReference type="Gene3D" id="3.30.1540.20">
    <property type="entry name" value="MutL, C-terminal domain, dimerisation subdomain"/>
    <property type="match status" value="1"/>
</dbReference>
<dbReference type="Gene3D" id="3.30.1370.100">
    <property type="entry name" value="MutL, C-terminal domain, regulatory subdomain"/>
    <property type="match status" value="1"/>
</dbReference>
<dbReference type="HAMAP" id="MF_00149">
    <property type="entry name" value="DNA_mis_repair"/>
    <property type="match status" value="1"/>
</dbReference>
<dbReference type="InterPro" id="IPR014762">
    <property type="entry name" value="DNA_mismatch_repair_CS"/>
</dbReference>
<dbReference type="InterPro" id="IPR020667">
    <property type="entry name" value="DNA_mismatch_repair_MutL"/>
</dbReference>
<dbReference type="InterPro" id="IPR013507">
    <property type="entry name" value="DNA_mismatch_S5_2-like"/>
</dbReference>
<dbReference type="InterPro" id="IPR036890">
    <property type="entry name" value="HATPase_C_sf"/>
</dbReference>
<dbReference type="InterPro" id="IPR002099">
    <property type="entry name" value="MutL/Mlh/PMS"/>
</dbReference>
<dbReference type="InterPro" id="IPR038973">
    <property type="entry name" value="MutL/Mlh/Pms-like"/>
</dbReference>
<dbReference type="InterPro" id="IPR014790">
    <property type="entry name" value="MutL_C"/>
</dbReference>
<dbReference type="InterPro" id="IPR042120">
    <property type="entry name" value="MutL_C_dimsub"/>
</dbReference>
<dbReference type="InterPro" id="IPR042121">
    <property type="entry name" value="MutL_C_regsub"/>
</dbReference>
<dbReference type="InterPro" id="IPR037198">
    <property type="entry name" value="MutL_C_sf"/>
</dbReference>
<dbReference type="InterPro" id="IPR020568">
    <property type="entry name" value="Ribosomal_Su5_D2-typ_SF"/>
</dbReference>
<dbReference type="InterPro" id="IPR014721">
    <property type="entry name" value="Ribsml_uS5_D2-typ_fold_subgr"/>
</dbReference>
<dbReference type="NCBIfam" id="TIGR00585">
    <property type="entry name" value="mutl"/>
    <property type="match status" value="1"/>
</dbReference>
<dbReference type="PANTHER" id="PTHR10073">
    <property type="entry name" value="DNA MISMATCH REPAIR PROTEIN MLH, PMS, MUTL"/>
    <property type="match status" value="1"/>
</dbReference>
<dbReference type="PANTHER" id="PTHR10073:SF12">
    <property type="entry name" value="DNA MISMATCH REPAIR PROTEIN MLH1"/>
    <property type="match status" value="1"/>
</dbReference>
<dbReference type="Pfam" id="PF01119">
    <property type="entry name" value="DNA_mis_repair"/>
    <property type="match status" value="1"/>
</dbReference>
<dbReference type="Pfam" id="PF13589">
    <property type="entry name" value="HATPase_c_3"/>
    <property type="match status" value="1"/>
</dbReference>
<dbReference type="Pfam" id="PF08676">
    <property type="entry name" value="MutL_C"/>
    <property type="match status" value="1"/>
</dbReference>
<dbReference type="SMART" id="SM01340">
    <property type="entry name" value="DNA_mis_repair"/>
    <property type="match status" value="1"/>
</dbReference>
<dbReference type="SMART" id="SM00853">
    <property type="entry name" value="MutL_C"/>
    <property type="match status" value="1"/>
</dbReference>
<dbReference type="SUPFAM" id="SSF55874">
    <property type="entry name" value="ATPase domain of HSP90 chaperone/DNA topoisomerase II/histidine kinase"/>
    <property type="match status" value="1"/>
</dbReference>
<dbReference type="SUPFAM" id="SSF118116">
    <property type="entry name" value="DNA mismatch repair protein MutL"/>
    <property type="match status" value="1"/>
</dbReference>
<dbReference type="SUPFAM" id="SSF54211">
    <property type="entry name" value="Ribosomal protein S5 domain 2-like"/>
    <property type="match status" value="1"/>
</dbReference>
<dbReference type="PROSITE" id="PS00058">
    <property type="entry name" value="DNA_MISMATCH_REPAIR_1"/>
    <property type="match status" value="1"/>
</dbReference>
<feature type="chain" id="PRO_1000192165" description="DNA mismatch repair protein MutL">
    <location>
        <begin position="1"/>
        <end position="584"/>
    </location>
</feature>
<reference key="1">
    <citation type="journal article" date="2009" name="Science">
        <title>The dynamics and time scale of ongoing genomic erosion in symbiotic bacteria.</title>
        <authorList>
            <person name="Moran N.A."/>
            <person name="McLaughlin H.J."/>
            <person name="Sorek R."/>
        </authorList>
    </citation>
    <scope>NUCLEOTIDE SEQUENCE [LARGE SCALE GENOMIC DNA]</scope>
    <source>
        <strain>Tuc7</strain>
    </source>
</reference>
<gene>
    <name evidence="1" type="primary">mutL</name>
    <name type="ordered locus">BUAPTUC7_564</name>
</gene>
<accession>B8D891</accession>